<evidence type="ECO:0000255" key="1">
    <source>
        <dbReference type="HAMAP-Rule" id="MF_01523"/>
    </source>
</evidence>
<organism>
    <name type="scientific">Shigella sonnei (strain Ss046)</name>
    <dbReference type="NCBI Taxonomy" id="300269"/>
    <lineage>
        <taxon>Bacteria</taxon>
        <taxon>Pseudomonadati</taxon>
        <taxon>Pseudomonadota</taxon>
        <taxon>Gammaproteobacteria</taxon>
        <taxon>Enterobacterales</taxon>
        <taxon>Enterobacteriaceae</taxon>
        <taxon>Shigella</taxon>
    </lineage>
</organism>
<accession>Q3YW34</accession>
<proteinExistence type="inferred from homology"/>
<feature type="chain" id="PRO_0000244285" description="Ribosomal RNA small subunit methyltransferase J">
    <location>
        <begin position="1"/>
        <end position="250"/>
    </location>
</feature>
<feature type="binding site" evidence="1">
    <location>
        <begin position="101"/>
        <end position="102"/>
    </location>
    <ligand>
        <name>S-adenosyl-L-methionine</name>
        <dbReference type="ChEBI" id="CHEBI:59789"/>
    </ligand>
</feature>
<feature type="binding site" evidence="1">
    <location>
        <begin position="117"/>
        <end position="118"/>
    </location>
    <ligand>
        <name>S-adenosyl-L-methionine</name>
        <dbReference type="ChEBI" id="CHEBI:59789"/>
    </ligand>
</feature>
<feature type="binding site" evidence="1">
    <location>
        <begin position="153"/>
        <end position="154"/>
    </location>
    <ligand>
        <name>S-adenosyl-L-methionine</name>
        <dbReference type="ChEBI" id="CHEBI:59789"/>
    </ligand>
</feature>
<feature type="binding site" evidence="1">
    <location>
        <position position="171"/>
    </location>
    <ligand>
        <name>S-adenosyl-L-methionine</name>
        <dbReference type="ChEBI" id="CHEBI:59789"/>
    </ligand>
</feature>
<gene>
    <name evidence="1" type="primary">rsmJ</name>
    <name type="synonym">yhiQ</name>
    <name type="ordered locus">SSON_3732</name>
</gene>
<keyword id="KW-0963">Cytoplasm</keyword>
<keyword id="KW-0489">Methyltransferase</keyword>
<keyword id="KW-1185">Reference proteome</keyword>
<keyword id="KW-0698">rRNA processing</keyword>
<keyword id="KW-0949">S-adenosyl-L-methionine</keyword>
<keyword id="KW-0808">Transferase</keyword>
<comment type="function">
    <text evidence="1">Specifically methylates the guanosine in position 1516 of 16S rRNA.</text>
</comment>
<comment type="catalytic activity">
    <reaction evidence="1">
        <text>guanosine(1516) in 16S rRNA + S-adenosyl-L-methionine = N(2)-methylguanosine(1516) in 16S rRNA + S-adenosyl-L-homocysteine + H(+)</text>
        <dbReference type="Rhea" id="RHEA:43220"/>
        <dbReference type="Rhea" id="RHEA-COMP:10412"/>
        <dbReference type="Rhea" id="RHEA-COMP:10413"/>
        <dbReference type="ChEBI" id="CHEBI:15378"/>
        <dbReference type="ChEBI" id="CHEBI:57856"/>
        <dbReference type="ChEBI" id="CHEBI:59789"/>
        <dbReference type="ChEBI" id="CHEBI:74269"/>
        <dbReference type="ChEBI" id="CHEBI:74481"/>
        <dbReference type="EC" id="2.1.1.242"/>
    </reaction>
</comment>
<comment type="subcellular location">
    <subcellularLocation>
        <location evidence="1">Cytoplasm</location>
    </subcellularLocation>
</comment>
<comment type="similarity">
    <text evidence="1">Belongs to the methyltransferase superfamily. RsmJ family.</text>
</comment>
<dbReference type="EC" id="2.1.1.242" evidence="1"/>
<dbReference type="EMBL" id="CP000038">
    <property type="protein sequence ID" value="AAZ90278.1"/>
    <property type="molecule type" value="Genomic_DNA"/>
</dbReference>
<dbReference type="RefSeq" id="WP_000686608.1">
    <property type="nucleotide sequence ID" value="NC_007384.1"/>
</dbReference>
<dbReference type="SMR" id="Q3YW34"/>
<dbReference type="GeneID" id="93778496"/>
<dbReference type="KEGG" id="ssn:SSON_3732"/>
<dbReference type="HOGENOM" id="CLU_076324_0_0_6"/>
<dbReference type="Proteomes" id="UP000002529">
    <property type="component" value="Chromosome"/>
</dbReference>
<dbReference type="GO" id="GO:0005737">
    <property type="term" value="C:cytoplasm"/>
    <property type="evidence" value="ECO:0007669"/>
    <property type="project" value="UniProtKB-SubCell"/>
</dbReference>
<dbReference type="GO" id="GO:0008990">
    <property type="term" value="F:rRNA (guanine-N2-)-methyltransferase activity"/>
    <property type="evidence" value="ECO:0007669"/>
    <property type="project" value="UniProtKB-UniRule"/>
</dbReference>
<dbReference type="CDD" id="cd02440">
    <property type="entry name" value="AdoMet_MTases"/>
    <property type="match status" value="1"/>
</dbReference>
<dbReference type="FunFam" id="3.40.1630.10:FF:000001">
    <property type="entry name" value="Ribosomal RNA small subunit methyltransferase J"/>
    <property type="match status" value="1"/>
</dbReference>
<dbReference type="FunFam" id="3.40.50.150:FF:000072">
    <property type="entry name" value="Ribosomal RNA small subunit methyltransferase J"/>
    <property type="match status" value="1"/>
</dbReference>
<dbReference type="Gene3D" id="3.40.50.150">
    <property type="entry name" value="Vaccinia Virus protein VP39"/>
    <property type="match status" value="1"/>
</dbReference>
<dbReference type="Gene3D" id="3.40.1630.10">
    <property type="entry name" value="YhiQ-like domain"/>
    <property type="match status" value="1"/>
</dbReference>
<dbReference type="HAMAP" id="MF_01523">
    <property type="entry name" value="16SrRNA_methyltr_J"/>
    <property type="match status" value="1"/>
</dbReference>
<dbReference type="InterPro" id="IPR007536">
    <property type="entry name" value="16SrRNA_methylTrfase_J"/>
</dbReference>
<dbReference type="InterPro" id="IPR029063">
    <property type="entry name" value="SAM-dependent_MTases_sf"/>
</dbReference>
<dbReference type="NCBIfam" id="NF008012">
    <property type="entry name" value="PRK10742.1"/>
    <property type="match status" value="1"/>
</dbReference>
<dbReference type="PANTHER" id="PTHR36112">
    <property type="entry name" value="RIBOSOMAL RNA SMALL SUBUNIT METHYLTRANSFERASE J"/>
    <property type="match status" value="1"/>
</dbReference>
<dbReference type="PANTHER" id="PTHR36112:SF1">
    <property type="entry name" value="RIBOSOMAL RNA SMALL SUBUNIT METHYLTRANSFERASE J"/>
    <property type="match status" value="1"/>
</dbReference>
<dbReference type="Pfam" id="PF04445">
    <property type="entry name" value="SAM_MT"/>
    <property type="match status" value="1"/>
</dbReference>
<dbReference type="SUPFAM" id="SSF53335">
    <property type="entry name" value="S-adenosyl-L-methionine-dependent methyltransferases"/>
    <property type="match status" value="1"/>
</dbReference>
<sequence length="250" mass="26919">MKICLIDETGAGDGALSVLAARWGLEHDEDNLMALVLTPEHLELRKRDEPKLGGIFVDFVGGAMAHRRKFGGGRGEAVAKAVGIKGDYLPDVVDATAGLGRDAFVLASVGCRVRMLERNPVVAALLDDGLARGYADAEIGGWLQERLQLIHASSLTALTDITPRPQVVYLDPMFPHKQKSALVKKEMRVFQSLVGPDLDADGLLEPARLLATKRVVVKRPDYAPPLANVATPNAVVTKGHRFDIYAGTPV</sequence>
<protein>
    <recommendedName>
        <fullName evidence="1">Ribosomal RNA small subunit methyltransferase J</fullName>
        <ecNumber evidence="1">2.1.1.242</ecNumber>
    </recommendedName>
    <alternativeName>
        <fullName evidence="1">16S rRNA m2G1516 methyltransferase</fullName>
    </alternativeName>
    <alternativeName>
        <fullName evidence="1">rRNA (guanine-N(2)-)-methyltransferase</fullName>
    </alternativeName>
</protein>
<name>RSMJ_SHISS</name>
<reference key="1">
    <citation type="journal article" date="2005" name="Nucleic Acids Res.">
        <title>Genome dynamics and diversity of Shigella species, the etiologic agents of bacillary dysentery.</title>
        <authorList>
            <person name="Yang F."/>
            <person name="Yang J."/>
            <person name="Zhang X."/>
            <person name="Chen L."/>
            <person name="Jiang Y."/>
            <person name="Yan Y."/>
            <person name="Tang X."/>
            <person name="Wang J."/>
            <person name="Xiong Z."/>
            <person name="Dong J."/>
            <person name="Xue Y."/>
            <person name="Zhu Y."/>
            <person name="Xu X."/>
            <person name="Sun L."/>
            <person name="Chen S."/>
            <person name="Nie H."/>
            <person name="Peng J."/>
            <person name="Xu J."/>
            <person name="Wang Y."/>
            <person name="Yuan Z."/>
            <person name="Wen Y."/>
            <person name="Yao Z."/>
            <person name="Shen Y."/>
            <person name="Qiang B."/>
            <person name="Hou Y."/>
            <person name="Yu J."/>
            <person name="Jin Q."/>
        </authorList>
    </citation>
    <scope>NUCLEOTIDE SEQUENCE [LARGE SCALE GENOMIC DNA]</scope>
    <source>
        <strain>Ss046</strain>
    </source>
</reference>